<gene>
    <name type="primary">PRDX6</name>
    <name type="ORF">RCJMB04_18k11</name>
</gene>
<feature type="initiator methionine" description="Removed" evidence="1">
    <location>
        <position position="1"/>
    </location>
</feature>
<feature type="chain" id="PRO_0000256863" description="Peroxiredoxin-6">
    <location>
        <begin position="2"/>
        <end position="224"/>
    </location>
</feature>
<feature type="domain" description="Thioredoxin" evidence="5">
    <location>
        <begin position="4"/>
        <end position="168"/>
    </location>
</feature>
<feature type="region of interest" description="Required and sufficient for targeting to lysosomes and lamellar bodies" evidence="2">
    <location>
        <begin position="30"/>
        <end position="39"/>
    </location>
</feature>
<feature type="active site" description="Cysteine sulfenic acid (-SOH) intermediate; for peroxidase activity" evidence="4">
    <location>
        <position position="46"/>
    </location>
</feature>
<feature type="active site" description="For phospholipase activity" evidence="2">
    <location>
        <position position="139"/>
    </location>
</feature>
<feature type="site" description="Important for phospholipase activity" evidence="2">
    <location>
        <position position="31"/>
    </location>
</feature>
<feature type="modified residue" description="Phosphotyrosine" evidence="1">
    <location>
        <position position="88"/>
    </location>
</feature>
<feature type="modified residue" description="Phosphothreonine; by MAPK" evidence="2">
    <location>
        <position position="176"/>
    </location>
</feature>
<dbReference type="EC" id="1.11.1.27" evidence="4"/>
<dbReference type="EC" id="3.1.1.4"/>
<dbReference type="EC" id="2.3.1.23" evidence="4"/>
<dbReference type="EMBL" id="AJ720480">
    <property type="protein sequence ID" value="CAG32139.1"/>
    <property type="molecule type" value="mRNA"/>
</dbReference>
<dbReference type="RefSeq" id="NP_001034418.1">
    <property type="nucleotide sequence ID" value="NM_001039329.2"/>
</dbReference>
<dbReference type="SMR" id="Q5ZJF4"/>
<dbReference type="BioGRID" id="687951">
    <property type="interactions" value="1"/>
</dbReference>
<dbReference type="FunCoup" id="Q5ZJF4">
    <property type="interactions" value="1616"/>
</dbReference>
<dbReference type="IntAct" id="Q5ZJF4">
    <property type="interactions" value="1"/>
</dbReference>
<dbReference type="STRING" id="9031.ENSGALP00000004817"/>
<dbReference type="PeroxiBase" id="4421">
    <property type="entry name" value="Gga1CysPrx"/>
</dbReference>
<dbReference type="PaxDb" id="9031-ENSGALP00000004817"/>
<dbReference type="GeneID" id="429062"/>
<dbReference type="KEGG" id="gga:429062"/>
<dbReference type="CTD" id="9588"/>
<dbReference type="VEuPathDB" id="HostDB:geneid_429062"/>
<dbReference type="eggNOG" id="KOG0854">
    <property type="taxonomic scope" value="Eukaryota"/>
</dbReference>
<dbReference type="InParanoid" id="Q5ZJF4"/>
<dbReference type="OrthoDB" id="2996783at2759"/>
<dbReference type="PhylomeDB" id="Q5ZJF4"/>
<dbReference type="BRENDA" id="3.1.1.4">
    <property type="organism ID" value="1306"/>
</dbReference>
<dbReference type="PRO" id="PR:Q5ZJF4"/>
<dbReference type="Proteomes" id="UP000000539">
    <property type="component" value="Unassembled WGS sequence"/>
</dbReference>
<dbReference type="GO" id="GO:0005829">
    <property type="term" value="C:cytosol"/>
    <property type="evidence" value="ECO:0000318"/>
    <property type="project" value="GO_Central"/>
</dbReference>
<dbReference type="GO" id="GO:0005615">
    <property type="term" value="C:extracellular space"/>
    <property type="evidence" value="ECO:0000314"/>
    <property type="project" value="AgBase"/>
</dbReference>
<dbReference type="GO" id="GO:0005764">
    <property type="term" value="C:lysosome"/>
    <property type="evidence" value="ECO:0007669"/>
    <property type="project" value="UniProtKB-SubCell"/>
</dbReference>
<dbReference type="GO" id="GO:0047184">
    <property type="term" value="F:1-acylglycerophosphocholine O-acyltransferase activity"/>
    <property type="evidence" value="ECO:0000250"/>
    <property type="project" value="UniProtKB"/>
</dbReference>
<dbReference type="GO" id="GO:0004601">
    <property type="term" value="F:peroxidase activity"/>
    <property type="evidence" value="ECO:0000318"/>
    <property type="project" value="GO_Central"/>
</dbReference>
<dbReference type="GO" id="GO:0051920">
    <property type="term" value="F:peroxiredoxin activity"/>
    <property type="evidence" value="ECO:0007669"/>
    <property type="project" value="InterPro"/>
</dbReference>
<dbReference type="GO" id="GO:0004623">
    <property type="term" value="F:phospholipase A2 activity"/>
    <property type="evidence" value="ECO:0000250"/>
    <property type="project" value="UniProtKB"/>
</dbReference>
<dbReference type="GO" id="GO:0045454">
    <property type="term" value="P:cell redox homeostasis"/>
    <property type="evidence" value="ECO:0000318"/>
    <property type="project" value="GO_Central"/>
</dbReference>
<dbReference type="GO" id="GO:0016042">
    <property type="term" value="P:lipid catabolic process"/>
    <property type="evidence" value="ECO:0007669"/>
    <property type="project" value="UniProtKB-KW"/>
</dbReference>
<dbReference type="CDD" id="cd03016">
    <property type="entry name" value="PRX_1cys"/>
    <property type="match status" value="1"/>
</dbReference>
<dbReference type="FunFam" id="3.30.1020.10:FF:000001">
    <property type="entry name" value="1-Cys peroxiredoxin"/>
    <property type="match status" value="1"/>
</dbReference>
<dbReference type="FunFam" id="3.40.30.10:FF:000011">
    <property type="entry name" value="Peroxiredoxin PRX1"/>
    <property type="match status" value="1"/>
</dbReference>
<dbReference type="Gene3D" id="3.30.1020.10">
    <property type="entry name" value="Antioxidant, Horf6, Chain A, domain2"/>
    <property type="match status" value="1"/>
</dbReference>
<dbReference type="Gene3D" id="3.40.30.10">
    <property type="entry name" value="Glutaredoxin"/>
    <property type="match status" value="1"/>
</dbReference>
<dbReference type="InterPro" id="IPR000866">
    <property type="entry name" value="AhpC/TSA"/>
</dbReference>
<dbReference type="InterPro" id="IPR024706">
    <property type="entry name" value="Peroxiredoxin_AhpC-typ"/>
</dbReference>
<dbReference type="InterPro" id="IPR019479">
    <property type="entry name" value="Peroxiredoxin_C"/>
</dbReference>
<dbReference type="InterPro" id="IPR045020">
    <property type="entry name" value="PRX_1cys"/>
</dbReference>
<dbReference type="InterPro" id="IPR036249">
    <property type="entry name" value="Thioredoxin-like_sf"/>
</dbReference>
<dbReference type="InterPro" id="IPR013766">
    <property type="entry name" value="Thioredoxin_domain"/>
</dbReference>
<dbReference type="PANTHER" id="PTHR43503">
    <property type="entry name" value="MCG48959-RELATED"/>
    <property type="match status" value="1"/>
</dbReference>
<dbReference type="PANTHER" id="PTHR43503:SF4">
    <property type="entry name" value="PEROXIREDOXIN-6"/>
    <property type="match status" value="1"/>
</dbReference>
<dbReference type="Pfam" id="PF10417">
    <property type="entry name" value="1-cysPrx_C"/>
    <property type="match status" value="1"/>
</dbReference>
<dbReference type="Pfam" id="PF00578">
    <property type="entry name" value="AhpC-TSA"/>
    <property type="match status" value="1"/>
</dbReference>
<dbReference type="PIRSF" id="PIRSF000239">
    <property type="entry name" value="AHPC"/>
    <property type="match status" value="1"/>
</dbReference>
<dbReference type="SUPFAM" id="SSF52833">
    <property type="entry name" value="Thioredoxin-like"/>
    <property type="match status" value="1"/>
</dbReference>
<dbReference type="PROSITE" id="PS51352">
    <property type="entry name" value="THIOREDOXIN_2"/>
    <property type="match status" value="1"/>
</dbReference>
<accession>Q5ZJF4</accession>
<keyword id="KW-0049">Antioxidant</keyword>
<keyword id="KW-0963">Cytoplasm</keyword>
<keyword id="KW-0378">Hydrolase</keyword>
<keyword id="KW-0442">Lipid degradation</keyword>
<keyword id="KW-0443">Lipid metabolism</keyword>
<keyword id="KW-0458">Lysosome</keyword>
<keyword id="KW-0511">Multifunctional enzyme</keyword>
<keyword id="KW-0560">Oxidoreductase</keyword>
<keyword id="KW-0575">Peroxidase</keyword>
<keyword id="KW-0597">Phosphoprotein</keyword>
<keyword id="KW-0676">Redox-active center</keyword>
<keyword id="KW-1185">Reference proteome</keyword>
<keyword id="KW-0808">Transferase</keyword>
<comment type="function">
    <text evidence="4">Thiol-specific peroxidase that catalyzes the reduction of hydrogen peroxide and organic hydroperoxides to water and alcohols, respectively (By similarity). Can reduce H(2)O(2) and short chain organic, fatty acid, and phospholipid hydroperoxides (By similarity). Also has phospholipase activity, and can therefore either reduce the oxidized sn-2 fatty acyl group of phospholipids (peroxidase activity) or hydrolyze the sn-2 ester bond of phospholipids (phospholipase activity) (By similarity). These activities are dependent on binding to phospholipids at acidic pH and to oxidized phospholipds at cytosolic pH (By similarity). Plays a role in cell protection against oxidative stress by detoxifying peroxides and in phospholipid homeostasis (By similarity). Exhibits acyl-CoA-dependent lysophospholipid acyltransferase which mediates the conversion of lysophosphatidylcholine (1-acyl-sn-glycero-3-phosphocholine or LPC) into phosphatidylcholine (1,2-diacyl-sn-glycero-3-phosphocholine or PC) (By similarity). Shows a clear preference for LPC as the lysophospholipid and for palmitoyl CoA as the fatty acyl substrate (By similarity).</text>
</comment>
<comment type="catalytic activity">
    <reaction evidence="4">
        <text>a hydroperoxide + 2 glutathione = an alcohol + glutathione disulfide + H2O</text>
        <dbReference type="Rhea" id="RHEA:62632"/>
        <dbReference type="ChEBI" id="CHEBI:15377"/>
        <dbReference type="ChEBI" id="CHEBI:30879"/>
        <dbReference type="ChEBI" id="CHEBI:35924"/>
        <dbReference type="ChEBI" id="CHEBI:57925"/>
        <dbReference type="ChEBI" id="CHEBI:58297"/>
        <dbReference type="EC" id="1.11.1.27"/>
    </reaction>
</comment>
<comment type="catalytic activity">
    <reaction evidence="4">
        <text>a 1,2-diacyl-sn-glycero-3-phosphocholine + H2O = a 1-acyl-sn-glycero-3-phosphocholine + a fatty acid + H(+)</text>
        <dbReference type="Rhea" id="RHEA:15801"/>
        <dbReference type="ChEBI" id="CHEBI:15377"/>
        <dbReference type="ChEBI" id="CHEBI:15378"/>
        <dbReference type="ChEBI" id="CHEBI:28868"/>
        <dbReference type="ChEBI" id="CHEBI:57643"/>
        <dbReference type="ChEBI" id="CHEBI:58168"/>
        <dbReference type="EC" id="3.1.1.4"/>
    </reaction>
</comment>
<comment type="catalytic activity">
    <reaction evidence="4">
        <text>a 1-acyl-sn-glycero-3-phosphocholine + an acyl-CoA = a 1,2-diacyl-sn-glycero-3-phosphocholine + CoA</text>
        <dbReference type="Rhea" id="RHEA:12937"/>
        <dbReference type="ChEBI" id="CHEBI:57287"/>
        <dbReference type="ChEBI" id="CHEBI:57643"/>
        <dbReference type="ChEBI" id="CHEBI:58168"/>
        <dbReference type="ChEBI" id="CHEBI:58342"/>
        <dbReference type="EC" id="2.3.1.23"/>
    </reaction>
</comment>
<comment type="catalytic activity">
    <reaction evidence="4">
        <text>1-hexadecanoyl-sn-glycero-3-phosphocholine + hexadecanoyl-CoA = 1,2-dihexadecanoyl-sn-glycero-3-phosphocholine + CoA</text>
        <dbReference type="Rhea" id="RHEA:35983"/>
        <dbReference type="ChEBI" id="CHEBI:57287"/>
        <dbReference type="ChEBI" id="CHEBI:57379"/>
        <dbReference type="ChEBI" id="CHEBI:72998"/>
        <dbReference type="ChEBI" id="CHEBI:72999"/>
    </reaction>
    <physiologicalReaction direction="left-to-right" evidence="4">
        <dbReference type="Rhea" id="RHEA:35984"/>
    </physiologicalReaction>
</comment>
<comment type="catalytic activity">
    <reaction evidence="4">
        <text>1,2-dihexadecanoyl-sn-glycero-3-phosphocholine + H2O = 1-hexadecanoyl-sn-glycero-3-phosphocholine + hexadecanoate + H(+)</text>
        <dbReference type="Rhea" id="RHEA:41223"/>
        <dbReference type="ChEBI" id="CHEBI:7896"/>
        <dbReference type="ChEBI" id="CHEBI:15377"/>
        <dbReference type="ChEBI" id="CHEBI:15378"/>
        <dbReference type="ChEBI" id="CHEBI:72998"/>
        <dbReference type="ChEBI" id="CHEBI:72999"/>
    </reaction>
    <physiologicalReaction direction="left-to-right" evidence="4">
        <dbReference type="Rhea" id="RHEA:41224"/>
    </physiologicalReaction>
</comment>
<comment type="subunit">
    <text evidence="3 4">Homodimer (By similarity). Interacts with GSTP1; mediates PRDX6 glutathionylation and regeneration (By similarity).</text>
</comment>
<comment type="subcellular location">
    <subcellularLocation>
        <location evidence="2">Cytoplasm</location>
    </subcellularLocation>
    <subcellularLocation>
        <location evidence="2">Lysosome</location>
    </subcellularLocation>
    <text evidence="2">Also found in lung secretory organelles (lamellar bodies).</text>
</comment>
<comment type="PTM">
    <text evidence="4">Irreversibly inactivated by overoxidation of Cys-46 to sulfinic acid (Cys-SO(2)H) and sulfonic acid (Cys-SO(3)H) forms upon oxidative stress.</text>
</comment>
<comment type="PTM">
    <text evidence="2">Phosphorylation at Thr-176 by MAP kinases increases the phospholipase activity of the enzyme (By similarity). The phosphorylated form exhibits a greater lysophosphatidylcholine acyltransferase activity compared to the non-phosphorylated form (By similarity).</text>
</comment>
<comment type="miscellaneous">
    <text evidence="2">The active site is a conserved redox-active cysteine residue, the peroxidatic cysteine (C(P)), which makes the nucleophilic attack on the peroxide substrate. The peroxide oxidizes the C(P)-SH to cysteine sulfenic acid (C(P)-SOH), which then reacts with another cysteine residue, the resolving cysteine (C(R)), to form a disulfide bridge. The disulfide is subsequently reduced by an appropriate electron donor to complete the catalytic cycle. In this 1-Cys peroxiredoxin, no C(R) is present and C(P) instead forms a disulfide with a cysteine from another protein or with a small thiol molecule. C(P) is reactivated by glutathionylation mediated by glutathione S-transferase Pi, followed by spontaneous reduction of the enzyme with glutathione.</text>
</comment>
<comment type="similarity">
    <text evidence="6">Belongs to the peroxiredoxin family. Prx6 subfamily.</text>
</comment>
<reference key="1">
    <citation type="journal article" date="2005" name="Genome Biol.">
        <title>Full-length cDNAs from chicken bursal lymphocytes to facilitate gene function analysis.</title>
        <authorList>
            <person name="Caldwell R.B."/>
            <person name="Kierzek A.M."/>
            <person name="Arakawa H."/>
            <person name="Bezzubov Y."/>
            <person name="Zaim J."/>
            <person name="Fiedler P."/>
            <person name="Kutter S."/>
            <person name="Blagodatski A."/>
            <person name="Kostovska D."/>
            <person name="Koter M."/>
            <person name="Plachy J."/>
            <person name="Carninci P."/>
            <person name="Hayashizaki Y."/>
            <person name="Buerstedde J.-M."/>
        </authorList>
    </citation>
    <scope>NUCLEOTIDE SEQUENCE [LARGE SCALE MRNA]</scope>
    <source>
        <strain>CB</strain>
        <tissue>Bursa of Fabricius</tissue>
    </source>
</reference>
<protein>
    <recommendedName>
        <fullName>Peroxiredoxin-6</fullName>
        <ecNumber evidence="4">1.11.1.27</ecNumber>
    </recommendedName>
    <alternativeName>
        <fullName>1-Cys peroxiredoxin</fullName>
        <shortName>1-Cys PRX</shortName>
    </alternativeName>
    <alternativeName>
        <fullName>Acidic calcium-independent phospholipase A2</fullName>
        <shortName>aiPLA2</shortName>
        <ecNumber>3.1.1.4</ecNumber>
    </alternativeName>
    <alternativeName>
        <fullName evidence="6">Glutathione-dependent peroxiredoxin</fullName>
    </alternativeName>
    <alternativeName>
        <fullName evidence="4">Lysophosphatidylcholine acyltransferase 5</fullName>
        <shortName>LPC acyltransferase 5</shortName>
        <shortName>LPCAT-5</shortName>
        <shortName>Lyso-PC acyltransferase 5</shortName>
        <ecNumber evidence="4">2.3.1.23</ecNumber>
    </alternativeName>
    <alternativeName>
        <fullName>Non-selenium glutathione peroxidase</fullName>
        <shortName>NSGPx</shortName>
    </alternativeName>
</protein>
<evidence type="ECO:0000250" key="1"/>
<evidence type="ECO:0000250" key="2">
    <source>
        <dbReference type="UniProtKB" id="O35244"/>
    </source>
</evidence>
<evidence type="ECO:0000250" key="3">
    <source>
        <dbReference type="UniProtKB" id="O77834"/>
    </source>
</evidence>
<evidence type="ECO:0000250" key="4">
    <source>
        <dbReference type="UniProtKB" id="P30041"/>
    </source>
</evidence>
<evidence type="ECO:0000255" key="5">
    <source>
        <dbReference type="PROSITE-ProRule" id="PRU00691"/>
    </source>
</evidence>
<evidence type="ECO:0000305" key="6"/>
<organism>
    <name type="scientific">Gallus gallus</name>
    <name type="common">Chicken</name>
    <dbReference type="NCBI Taxonomy" id="9031"/>
    <lineage>
        <taxon>Eukaryota</taxon>
        <taxon>Metazoa</taxon>
        <taxon>Chordata</taxon>
        <taxon>Craniata</taxon>
        <taxon>Vertebrata</taxon>
        <taxon>Euteleostomi</taxon>
        <taxon>Archelosauria</taxon>
        <taxon>Archosauria</taxon>
        <taxon>Dinosauria</taxon>
        <taxon>Saurischia</taxon>
        <taxon>Theropoda</taxon>
        <taxon>Coelurosauria</taxon>
        <taxon>Aves</taxon>
        <taxon>Neognathae</taxon>
        <taxon>Galloanserae</taxon>
        <taxon>Galliformes</taxon>
        <taxon>Phasianidae</taxon>
        <taxon>Phasianinae</taxon>
        <taxon>Gallus</taxon>
    </lineage>
</organism>
<name>PRDX6_CHICK</name>
<sequence>MPGLLLGDEAPNFEADTTQGGIRFHDFLGDSWGILFSHPRDFTPVCTTELGRAAKLAPEFSKRNVKMIALSIDSVPDHLAWSKDINAYNGDQPVEKLPFPIIADKDRELAVKLGMLDPDERDKDGMPLTARVVFIFGPDKKLKLSILYPATTGRNFDEILRVVDSLQLTAYKKVATPVDWKCGDSVMVVPTLPDEEAKKLFPKGVFTKDLPSGKKYLRYTPQPE</sequence>
<proteinExistence type="evidence at transcript level"/>